<gene>
    <name evidence="1" type="primary">fadB</name>
    <name type="ordered locus">VV1_0981</name>
</gene>
<dbReference type="EC" id="4.2.1.17" evidence="1"/>
<dbReference type="EC" id="5.1.2.3" evidence="1"/>
<dbReference type="EC" id="5.3.3.8" evidence="1"/>
<dbReference type="EC" id="1.1.1.35" evidence="1"/>
<dbReference type="EMBL" id="AE016795">
    <property type="protein sequence ID" value="AAO09471.1"/>
    <property type="molecule type" value="Genomic_DNA"/>
</dbReference>
<dbReference type="RefSeq" id="WP_011079018.1">
    <property type="nucleotide sequence ID" value="NC_004459.3"/>
</dbReference>
<dbReference type="SMR" id="Q8DDK6"/>
<dbReference type="KEGG" id="vvu:VV1_0981"/>
<dbReference type="HOGENOM" id="CLU_009834_16_3_6"/>
<dbReference type="UniPathway" id="UPA00659"/>
<dbReference type="Proteomes" id="UP000002275">
    <property type="component" value="Chromosome 1"/>
</dbReference>
<dbReference type="GO" id="GO:0036125">
    <property type="term" value="C:fatty acid beta-oxidation multienzyme complex"/>
    <property type="evidence" value="ECO:0007669"/>
    <property type="project" value="InterPro"/>
</dbReference>
<dbReference type="GO" id="GO:0008692">
    <property type="term" value="F:3-hydroxybutyryl-CoA epimerase activity"/>
    <property type="evidence" value="ECO:0007669"/>
    <property type="project" value="UniProtKB-UniRule"/>
</dbReference>
<dbReference type="GO" id="GO:0004165">
    <property type="term" value="F:delta(3)-delta(2)-enoyl-CoA isomerase activity"/>
    <property type="evidence" value="ECO:0007669"/>
    <property type="project" value="UniProtKB-UniRule"/>
</dbReference>
<dbReference type="GO" id="GO:0004300">
    <property type="term" value="F:enoyl-CoA hydratase activity"/>
    <property type="evidence" value="ECO:0007669"/>
    <property type="project" value="UniProtKB-UniRule"/>
</dbReference>
<dbReference type="GO" id="GO:0016509">
    <property type="term" value="F:long-chain-3-hydroxyacyl-CoA dehydrogenase activity"/>
    <property type="evidence" value="ECO:0007669"/>
    <property type="project" value="TreeGrafter"/>
</dbReference>
<dbReference type="GO" id="GO:0070403">
    <property type="term" value="F:NAD+ binding"/>
    <property type="evidence" value="ECO:0007669"/>
    <property type="project" value="InterPro"/>
</dbReference>
<dbReference type="GO" id="GO:0006635">
    <property type="term" value="P:fatty acid beta-oxidation"/>
    <property type="evidence" value="ECO:0007669"/>
    <property type="project" value="UniProtKB-UniRule"/>
</dbReference>
<dbReference type="CDD" id="cd06558">
    <property type="entry name" value="crotonase-like"/>
    <property type="match status" value="1"/>
</dbReference>
<dbReference type="FunFam" id="3.40.50.720:FF:000009">
    <property type="entry name" value="Fatty oxidation complex, alpha subunit"/>
    <property type="match status" value="1"/>
</dbReference>
<dbReference type="Gene3D" id="1.10.1040.50">
    <property type="match status" value="1"/>
</dbReference>
<dbReference type="Gene3D" id="3.90.226.10">
    <property type="entry name" value="2-enoyl-CoA Hydratase, Chain A, domain 1"/>
    <property type="match status" value="1"/>
</dbReference>
<dbReference type="Gene3D" id="3.40.50.720">
    <property type="entry name" value="NAD(P)-binding Rossmann-like Domain"/>
    <property type="match status" value="1"/>
</dbReference>
<dbReference type="HAMAP" id="MF_01621">
    <property type="entry name" value="FadB"/>
    <property type="match status" value="1"/>
</dbReference>
<dbReference type="InterPro" id="IPR006180">
    <property type="entry name" value="3-OHacyl-CoA_DH_CS"/>
</dbReference>
<dbReference type="InterPro" id="IPR006176">
    <property type="entry name" value="3-OHacyl-CoA_DH_NAD-bd"/>
</dbReference>
<dbReference type="InterPro" id="IPR006108">
    <property type="entry name" value="3HC_DH_C"/>
</dbReference>
<dbReference type="InterPro" id="IPR008927">
    <property type="entry name" value="6-PGluconate_DH-like_C_sf"/>
</dbReference>
<dbReference type="InterPro" id="IPR029045">
    <property type="entry name" value="ClpP/crotonase-like_dom_sf"/>
</dbReference>
<dbReference type="InterPro" id="IPR001753">
    <property type="entry name" value="Enoyl-CoA_hydra/iso"/>
</dbReference>
<dbReference type="InterPro" id="IPR050136">
    <property type="entry name" value="FA_oxidation_alpha_subunit"/>
</dbReference>
<dbReference type="InterPro" id="IPR012799">
    <property type="entry name" value="FadB"/>
</dbReference>
<dbReference type="InterPro" id="IPR036291">
    <property type="entry name" value="NAD(P)-bd_dom_sf"/>
</dbReference>
<dbReference type="NCBIfam" id="TIGR02437">
    <property type="entry name" value="FadB"/>
    <property type="match status" value="1"/>
</dbReference>
<dbReference type="NCBIfam" id="NF008727">
    <property type="entry name" value="PRK11730.1"/>
    <property type="match status" value="1"/>
</dbReference>
<dbReference type="PANTHER" id="PTHR43612">
    <property type="entry name" value="TRIFUNCTIONAL ENZYME SUBUNIT ALPHA"/>
    <property type="match status" value="1"/>
</dbReference>
<dbReference type="PANTHER" id="PTHR43612:SF3">
    <property type="entry name" value="TRIFUNCTIONAL ENZYME SUBUNIT ALPHA, MITOCHONDRIAL"/>
    <property type="match status" value="1"/>
</dbReference>
<dbReference type="Pfam" id="PF00725">
    <property type="entry name" value="3HCDH"/>
    <property type="match status" value="2"/>
</dbReference>
<dbReference type="Pfam" id="PF02737">
    <property type="entry name" value="3HCDH_N"/>
    <property type="match status" value="1"/>
</dbReference>
<dbReference type="Pfam" id="PF00378">
    <property type="entry name" value="ECH_1"/>
    <property type="match status" value="1"/>
</dbReference>
<dbReference type="SUPFAM" id="SSF48179">
    <property type="entry name" value="6-phosphogluconate dehydrogenase C-terminal domain-like"/>
    <property type="match status" value="2"/>
</dbReference>
<dbReference type="SUPFAM" id="SSF52096">
    <property type="entry name" value="ClpP/crotonase"/>
    <property type="match status" value="1"/>
</dbReference>
<dbReference type="SUPFAM" id="SSF51735">
    <property type="entry name" value="NAD(P)-binding Rossmann-fold domains"/>
    <property type="match status" value="1"/>
</dbReference>
<dbReference type="PROSITE" id="PS00067">
    <property type="entry name" value="3HCDH"/>
    <property type="match status" value="1"/>
</dbReference>
<protein>
    <recommendedName>
        <fullName evidence="1">Fatty acid oxidation complex subunit alpha</fullName>
    </recommendedName>
    <domain>
        <recommendedName>
            <fullName evidence="1">Enoyl-CoA hydratase/Delta(3)-cis-Delta(2)-trans-enoyl-CoA isomerase/3-hydroxybutyryl-CoA epimerase</fullName>
            <ecNumber evidence="1">4.2.1.17</ecNumber>
            <ecNumber evidence="1">5.1.2.3</ecNumber>
            <ecNumber evidence="1">5.3.3.8</ecNumber>
        </recommendedName>
    </domain>
    <domain>
        <recommendedName>
            <fullName evidence="1">3-hydroxyacyl-CoA dehydrogenase</fullName>
            <ecNumber evidence="1">1.1.1.35</ecNumber>
        </recommendedName>
    </domain>
</protein>
<organism>
    <name type="scientific">Vibrio vulnificus (strain CMCP6)</name>
    <dbReference type="NCBI Taxonomy" id="216895"/>
    <lineage>
        <taxon>Bacteria</taxon>
        <taxon>Pseudomonadati</taxon>
        <taxon>Pseudomonadota</taxon>
        <taxon>Gammaproteobacteria</taxon>
        <taxon>Vibrionales</taxon>
        <taxon>Vibrionaceae</taxon>
        <taxon>Vibrio</taxon>
    </lineage>
</organism>
<proteinExistence type="inferred from homology"/>
<keyword id="KW-0276">Fatty acid metabolism</keyword>
<keyword id="KW-0413">Isomerase</keyword>
<keyword id="KW-0442">Lipid degradation</keyword>
<keyword id="KW-0443">Lipid metabolism</keyword>
<keyword id="KW-0456">Lyase</keyword>
<keyword id="KW-0511">Multifunctional enzyme</keyword>
<keyword id="KW-0520">NAD</keyword>
<keyword id="KW-0560">Oxidoreductase</keyword>
<reference key="1">
    <citation type="submission" date="2002-12" db="EMBL/GenBank/DDBJ databases">
        <title>Complete genome sequence of Vibrio vulnificus CMCP6.</title>
        <authorList>
            <person name="Rhee J.H."/>
            <person name="Kim S.Y."/>
            <person name="Chung S.S."/>
            <person name="Kim J.J."/>
            <person name="Moon Y.H."/>
            <person name="Jeong H."/>
            <person name="Choy H.E."/>
        </authorList>
    </citation>
    <scope>NUCLEOTIDE SEQUENCE [LARGE SCALE GENOMIC DNA]</scope>
    <source>
        <strain>CMCP6</strain>
    </source>
</reference>
<evidence type="ECO:0000255" key="1">
    <source>
        <dbReference type="HAMAP-Rule" id="MF_01621"/>
    </source>
</evidence>
<comment type="function">
    <text evidence="1">Involved in the aerobic and anaerobic degradation of long-chain fatty acids via beta-oxidation cycle. Catalyzes the formation of 3-oxoacyl-CoA from enoyl-CoA via L-3-hydroxyacyl-CoA. It can also use D-3-hydroxyacyl-CoA and cis-3-enoyl-CoA as substrate.</text>
</comment>
<comment type="catalytic activity">
    <reaction evidence="1">
        <text>a (3S)-3-hydroxyacyl-CoA + NAD(+) = a 3-oxoacyl-CoA + NADH + H(+)</text>
        <dbReference type="Rhea" id="RHEA:22432"/>
        <dbReference type="ChEBI" id="CHEBI:15378"/>
        <dbReference type="ChEBI" id="CHEBI:57318"/>
        <dbReference type="ChEBI" id="CHEBI:57540"/>
        <dbReference type="ChEBI" id="CHEBI:57945"/>
        <dbReference type="ChEBI" id="CHEBI:90726"/>
        <dbReference type="EC" id="1.1.1.35"/>
    </reaction>
</comment>
<comment type="catalytic activity">
    <reaction evidence="1">
        <text>a (3S)-3-hydroxyacyl-CoA = a (2E)-enoyl-CoA + H2O</text>
        <dbReference type="Rhea" id="RHEA:16105"/>
        <dbReference type="ChEBI" id="CHEBI:15377"/>
        <dbReference type="ChEBI" id="CHEBI:57318"/>
        <dbReference type="ChEBI" id="CHEBI:58856"/>
        <dbReference type="EC" id="4.2.1.17"/>
    </reaction>
</comment>
<comment type="catalytic activity">
    <reaction evidence="1">
        <text>a 4-saturated-(3S)-3-hydroxyacyl-CoA = a (3E)-enoyl-CoA + H2O</text>
        <dbReference type="Rhea" id="RHEA:20724"/>
        <dbReference type="ChEBI" id="CHEBI:15377"/>
        <dbReference type="ChEBI" id="CHEBI:58521"/>
        <dbReference type="ChEBI" id="CHEBI:137480"/>
        <dbReference type="EC" id="4.2.1.17"/>
    </reaction>
</comment>
<comment type="catalytic activity">
    <reaction evidence="1">
        <text>(3S)-3-hydroxybutanoyl-CoA = (3R)-3-hydroxybutanoyl-CoA</text>
        <dbReference type="Rhea" id="RHEA:21760"/>
        <dbReference type="ChEBI" id="CHEBI:57315"/>
        <dbReference type="ChEBI" id="CHEBI:57316"/>
        <dbReference type="EC" id="5.1.2.3"/>
    </reaction>
</comment>
<comment type="catalytic activity">
    <reaction evidence="1">
        <text>a (3Z)-enoyl-CoA = a 4-saturated (2E)-enoyl-CoA</text>
        <dbReference type="Rhea" id="RHEA:45900"/>
        <dbReference type="ChEBI" id="CHEBI:85097"/>
        <dbReference type="ChEBI" id="CHEBI:85489"/>
        <dbReference type="EC" id="5.3.3.8"/>
    </reaction>
</comment>
<comment type="catalytic activity">
    <reaction evidence="1">
        <text>a (3E)-enoyl-CoA = a 4-saturated (2E)-enoyl-CoA</text>
        <dbReference type="Rhea" id="RHEA:45228"/>
        <dbReference type="ChEBI" id="CHEBI:58521"/>
        <dbReference type="ChEBI" id="CHEBI:85097"/>
        <dbReference type="EC" id="5.3.3.8"/>
    </reaction>
</comment>
<comment type="pathway">
    <text evidence="1">Lipid metabolism; fatty acid beta-oxidation.</text>
</comment>
<comment type="subunit">
    <text evidence="1">Heterotetramer of two alpha chains (FadB) and two beta chains (FadA).</text>
</comment>
<comment type="similarity">
    <text evidence="1">In the N-terminal section; belongs to the enoyl-CoA hydratase/isomerase family.</text>
</comment>
<comment type="similarity">
    <text evidence="1">In the C-terminal section; belongs to the 3-hydroxyacyl-CoA dehydrogenase family.</text>
</comment>
<name>FADB_VIBVU</name>
<sequence>MIYQAETLQVKEVQDGVAEILFCAPNSVNKLDLATLASLDKALDALTAHSGLKGVMLTSDKEAFIVGADITEFLGLFAKPEEELDQWLQFANSIFNKLEDLPVPTVAVVKGHTLGGGCECVLATDLRIGDKTTSIGLPETKLGIMPGFGGCVRLPRVIGADSAMEIITQGKACRAEEALKIGLLDAVVDSDRLYASALQTLTDAINEKIDWKARRQQKTSALTLSKLEAMMSFTMAKGLVAQVAGPHYPAPMTAVVTIEEGARFARNQALDIERKHFVKLAKSEEAKALVGLFLNDQYIKGIAKKAAKSANKETQRAAVLGAGIMGGGIAYQSALKGVPVIMKDIAQASLDLGMTEASKLLNKQLERGKIDGFKMAGILASITPSLHYAGIDNADIIVEAVVENPKVKAAVLSEVEEQVSEETVLTSNTSTIPINLLAKSLKRPENFCGMHFFNPVHRMPLVEIIRGEHTSDETINRVVAYAAKMGKSPIVVNDCPGFFVNRVLFPYFGGFSMLLRDGADFTQIDKVMERKFGWPMGPAYLLDVVGIDTAHHAQAVMAQGFPERMGKQGRDAIDALFEANKYGQKNGSGFYTYTMDKKGKPKKAFSDEIVPILAPVCAAQQAFDDQTIIQRMMIPMINEVVLCLQEGIIASAQEADMALVYGLGFPPFRGGVFRYLDSVGIANFVAMAQQHVELGAMYQVPQMLIDMAEKGQTFYGAQQQGSI</sequence>
<accession>Q8DDK6</accession>
<feature type="chain" id="PRO_0000109293" description="Fatty acid oxidation complex subunit alpha">
    <location>
        <begin position="1"/>
        <end position="723"/>
    </location>
</feature>
<feature type="region of interest" description="Enoyl-CoA hydratase/isomerase" evidence="1">
    <location>
        <begin position="1"/>
        <end position="189"/>
    </location>
</feature>
<feature type="region of interest" description="3-hydroxyacyl-CoA dehydrogenase" evidence="1">
    <location>
        <begin position="311"/>
        <end position="723"/>
    </location>
</feature>
<feature type="active site" description="For 3-hydroxyacyl-CoA dehydrogenase activity" evidence="1">
    <location>
        <position position="451"/>
    </location>
</feature>
<feature type="binding site" evidence="1">
    <location>
        <position position="296"/>
    </location>
    <ligand>
        <name>substrate</name>
    </ligand>
</feature>
<feature type="binding site" evidence="1">
    <location>
        <position position="325"/>
    </location>
    <ligand>
        <name>NAD(+)</name>
        <dbReference type="ChEBI" id="CHEBI:57540"/>
    </ligand>
</feature>
<feature type="binding site" evidence="1">
    <location>
        <position position="344"/>
    </location>
    <ligand>
        <name>NAD(+)</name>
        <dbReference type="ChEBI" id="CHEBI:57540"/>
    </ligand>
</feature>
<feature type="binding site" evidence="1">
    <location>
        <begin position="401"/>
        <end position="403"/>
    </location>
    <ligand>
        <name>NAD(+)</name>
        <dbReference type="ChEBI" id="CHEBI:57540"/>
    </ligand>
</feature>
<feature type="binding site" evidence="1">
    <location>
        <position position="408"/>
    </location>
    <ligand>
        <name>NAD(+)</name>
        <dbReference type="ChEBI" id="CHEBI:57540"/>
    </ligand>
</feature>
<feature type="binding site" evidence="1">
    <location>
        <position position="430"/>
    </location>
    <ligand>
        <name>NAD(+)</name>
        <dbReference type="ChEBI" id="CHEBI:57540"/>
    </ligand>
</feature>
<feature type="binding site" evidence="1">
    <location>
        <position position="454"/>
    </location>
    <ligand>
        <name>NAD(+)</name>
        <dbReference type="ChEBI" id="CHEBI:57540"/>
    </ligand>
</feature>
<feature type="binding site" evidence="1">
    <location>
        <position position="501"/>
    </location>
    <ligand>
        <name>substrate</name>
    </ligand>
</feature>
<feature type="binding site" evidence="1">
    <location>
        <position position="661"/>
    </location>
    <ligand>
        <name>substrate</name>
    </ligand>
</feature>
<feature type="site" description="Important for catalytic activity" evidence="1">
    <location>
        <position position="119"/>
    </location>
</feature>
<feature type="site" description="Important for catalytic activity" evidence="1">
    <location>
        <position position="139"/>
    </location>
</feature>